<sequence length="1248" mass="138416">MEFIPTQTFYNRRYQPRPWTPRPTIQVIRPRPRPQRKAGQLAQLISAVNKLTMRAVPQQKPRKNRKNKKQKQKQQAPRNNMNQKKQPPKKKPAQKKKKPGRRERMCMKIENDCIFEVKHEGKVTGYACLVGDKVMKPAHVKGTIDNADLAKLAFKRSSKYDLECAQIPVHMKSDASKFTHEKPEGYYNWHHGAVQYSGGRFTIPTGAGKPGDSGRPIFDNKGRVVAIVLGGANEGARTALSVVTWNKDIVTKITPEGAEEWSLAIPVMCLLANTTFPCSQPPCAPCCYEKEPEKTLRMLEDNVMSPGYYQLLQASLTCSPRRQRRSIKDNFNVYKATRPYLAHCPDCGEGHSCHSPVALERIRNEATDGTLKIQVSLQIGIKTDDSHDWTKLRYMDNHMPADAERAGLLVRTSAPCTITGTMGHFILARCPKGETLTVGFTDGRKISHSCTHPFHHDPPVIGREKFHSRPQHGKELPCSTYVQSNAATAEEVEVHMPPDTPDRTLMSQQSGNVKITVNSQTVRYKCNCGDSNEGLTTTDKVINNCKVDQCHAAVTNHKKWQYNSPLVPRNVELGDRKGKIHIPFPLANVTCRGPKARNPTVTYGKNQVIMLLYPDHPTLLSYRNMGEEPNYQEEWVTHKKEVRLTVPTEGLEVTWGNNEPYKYWPQLSTNGTAHGHPHEIILYYYELYPTMTVVVVSVASFVLLSMVGVAVGMCMCARRRCITPYELTPGATVPFLLSLICCIRTAKAATYQEAAVYLWNEQQPLFWLQAIIPLAALIVLCNCLRLLPCCCKTLTFLAVMSVGAHTVSAYEHVTVIPNTVGVPYKTLVNRPGYSPMVLEMELLSVTLEPTLSLDYITCEYKTVIPSPYVKCLRYSECKDKSLPDYSCKVFTGVYPFMWGGAYCFCDTENTQLSEAHVEKSESCKTEFASAYRAHTASASGKLRVLYQGNNVTVSAYANGDHAVTVKDAKFIVGPMSSAWTPFDNKIVVYKGDVYNMDYPPFGAGRPGQFGDIQSRTPESEDVYANTQLVLQRPSAGTVHVPYSQAPSGFKYWLKERGASLQHTAPFGCQIATNPVRAMNCAVGNMPISIDIPDAAFTRVVDAPSLTDMSCEVPACTHSSDFGGAAIIKYAASKKGKCAVHSMTNAVTIREAEIEVEGNSQLQISFSTALASAEFRVQVCSTQVHCAAECHPPKDHIVNYPASHTTLGVQDISATAMSWVQKITGGVGLVVAVAALILIVVLCVSFSRH</sequence>
<keyword id="KW-0167">Capsid protein</keyword>
<keyword id="KW-0165">Cleavage on pair of basic residues</keyword>
<keyword id="KW-1015">Disulfide bond</keyword>
<keyword id="KW-1170">Fusion of virus membrane with host endosomal membrane</keyword>
<keyword id="KW-1168">Fusion of virus membrane with host membrane</keyword>
<keyword id="KW-0325">Glycoprotein</keyword>
<keyword id="KW-1032">Host cell membrane</keyword>
<keyword id="KW-1035">Host cytoplasm</keyword>
<keyword id="KW-1038">Host endoplasmic reticulum</keyword>
<keyword id="KW-1040">Host Golgi apparatus</keyword>
<keyword id="KW-1043">Host membrane</keyword>
<keyword id="KW-1048">Host nucleus</keyword>
<keyword id="KW-0945">Host-virus interaction</keyword>
<keyword id="KW-0378">Hydrolase</keyword>
<keyword id="KW-0407">Ion channel</keyword>
<keyword id="KW-0406">Ion transport</keyword>
<keyword id="KW-0449">Lipoprotein</keyword>
<keyword id="KW-0472">Membrane</keyword>
<keyword id="KW-0564">Palmitate</keyword>
<keyword id="KW-0645">Protease</keyword>
<keyword id="KW-0694">RNA-binding</keyword>
<keyword id="KW-0720">Serine protease</keyword>
<keyword id="KW-1144">T=4 icosahedral capsid protein</keyword>
<keyword id="KW-0812">Transmembrane</keyword>
<keyword id="KW-1133">Transmembrane helix</keyword>
<keyword id="KW-0813">Transport</keyword>
<keyword id="KW-1161">Viral attachment to host cell</keyword>
<keyword id="KW-1234">Viral attachment to host entry receptor</keyword>
<keyword id="KW-1182">Viral ion channel</keyword>
<keyword id="KW-1162">Viral penetration into host cytoplasm</keyword>
<keyword id="KW-0946">Virion</keyword>
<keyword id="KW-1160">Virus entry into host cell</keyword>
<evidence type="ECO:0000250" key="1"/>
<evidence type="ECO:0000250" key="2">
    <source>
        <dbReference type="UniProtKB" id="P03315"/>
    </source>
</evidence>
<evidence type="ECO:0000250" key="3">
    <source>
        <dbReference type="UniProtKB" id="P03316"/>
    </source>
</evidence>
<evidence type="ECO:0000250" key="4">
    <source>
        <dbReference type="UniProtKB" id="P09592"/>
    </source>
</evidence>
<evidence type="ECO:0000250" key="5">
    <source>
        <dbReference type="UniProtKB" id="P0DOK1"/>
    </source>
</evidence>
<evidence type="ECO:0000250" key="6">
    <source>
        <dbReference type="UniProtKB" id="P27284"/>
    </source>
</evidence>
<evidence type="ECO:0000250" key="7">
    <source>
        <dbReference type="UniProtKB" id="Q5XXP3"/>
    </source>
</evidence>
<evidence type="ECO:0000250" key="8">
    <source>
        <dbReference type="UniProtKB" id="Q5Y388"/>
    </source>
</evidence>
<evidence type="ECO:0000250" key="9">
    <source>
        <dbReference type="UniProtKB" id="Q86925"/>
    </source>
</evidence>
<evidence type="ECO:0000250" key="10">
    <source>
        <dbReference type="UniProtKB" id="Q8JUX5"/>
    </source>
</evidence>
<evidence type="ECO:0000255" key="11"/>
<evidence type="ECO:0000255" key="12">
    <source>
        <dbReference type="PROSITE-ProRule" id="PRU01027"/>
    </source>
</evidence>
<evidence type="ECO:0000256" key="13">
    <source>
        <dbReference type="SAM" id="MobiDB-lite"/>
    </source>
</evidence>
<evidence type="ECO:0000305" key="14"/>
<name>POLS_CHIKN</name>
<feature type="chain" id="PRO_0000226231" description="Capsid protein" evidence="1">
    <location>
        <begin position="1"/>
        <end position="261"/>
    </location>
</feature>
<feature type="chain" id="PRO_0000226232" description="Precursor of protein E3/E2" evidence="1">
    <location>
        <begin position="262"/>
        <end position="748"/>
    </location>
</feature>
<feature type="chain" id="PRO_0000226233" description="Assembly protein E3" evidence="1">
    <location>
        <begin position="262"/>
        <end position="325"/>
    </location>
</feature>
<feature type="chain" id="PRO_0000226234" description="Spike glycoprotein E2" evidence="1">
    <location>
        <begin position="326"/>
        <end position="748"/>
    </location>
</feature>
<feature type="chain" id="PRO_0000226235" description="6K protein" evidence="1">
    <location>
        <begin position="749"/>
        <end position="809"/>
    </location>
</feature>
<feature type="chain" id="PRO_0000226236" description="Spike glycoprotein E1" evidence="1">
    <location>
        <begin position="810"/>
        <end position="1248"/>
    </location>
</feature>
<feature type="topological domain" description="Extracellular" evidence="11">
    <location>
        <begin position="262"/>
        <end position="692"/>
    </location>
</feature>
<feature type="transmembrane region" description="Helical" evidence="11">
    <location>
        <begin position="693"/>
        <end position="713"/>
    </location>
</feature>
<feature type="topological domain" description="Cytoplasmic" evidence="11">
    <location>
        <begin position="714"/>
        <end position="748"/>
    </location>
</feature>
<feature type="topological domain" description="Extracellular" evidence="11">
    <location>
        <begin position="749"/>
        <end position="763"/>
    </location>
</feature>
<feature type="transmembrane region" description="Helical" evidence="11">
    <location>
        <begin position="764"/>
        <end position="784"/>
    </location>
</feature>
<feature type="topological domain" description="Cytoplasmic" evidence="11">
    <location>
        <begin position="785"/>
        <end position="795"/>
    </location>
</feature>
<feature type="transmembrane region" description="Helical" evidence="11">
    <location>
        <begin position="796"/>
        <end position="816"/>
    </location>
</feature>
<feature type="topological domain" description="Extracellular" evidence="11">
    <location>
        <begin position="817"/>
        <end position="1224"/>
    </location>
</feature>
<feature type="transmembrane region" description="Helical" evidence="11">
    <location>
        <begin position="1225"/>
        <end position="1245"/>
    </location>
</feature>
<feature type="topological domain" description="Cytoplasmic" evidence="11">
    <location>
        <begin position="1246"/>
        <end position="1248"/>
    </location>
</feature>
<feature type="domain" description="Peptidase S3" evidence="12">
    <location>
        <begin position="113"/>
        <end position="261"/>
    </location>
</feature>
<feature type="region of interest" description="Disordered" evidence="13">
    <location>
        <begin position="1"/>
        <end position="104"/>
    </location>
</feature>
<feature type="region of interest" description="Host transcription inhibition" evidence="4">
    <location>
        <begin position="36"/>
        <end position="68"/>
    </location>
</feature>
<feature type="region of interest" description="Binding to the viral RNA" evidence="6">
    <location>
        <begin position="84"/>
        <end position="114"/>
    </location>
</feature>
<feature type="region of interest" description="Ribosome-binding" evidence="6">
    <location>
        <begin position="99"/>
        <end position="113"/>
    </location>
</feature>
<feature type="region of interest" description="Interaction with spike glycoprotein E2" evidence="3">
    <location>
        <begin position="155"/>
        <end position="160"/>
    </location>
</feature>
<feature type="region of interest" description="Dimerization of the capsid protein" evidence="5">
    <location>
        <begin position="183"/>
        <end position="193"/>
    </location>
</feature>
<feature type="region of interest" description="Dimerization of the capsid protein" evidence="5">
    <location>
        <begin position="219"/>
        <end position="223"/>
    </location>
</feature>
<feature type="region of interest" description="Functions as an uncleaved signal peptide for the precursor of protein E3/E2" evidence="2">
    <location>
        <begin position="262"/>
        <end position="274"/>
    </location>
</feature>
<feature type="region of interest" description="Interaction with host Mxra8 receptor" evidence="7">
    <location>
        <begin position="351"/>
        <end position="354"/>
    </location>
</feature>
<feature type="region of interest" description="Interaction with host Mxra8 receptor" evidence="7">
    <location>
        <begin position="387"/>
        <end position="389"/>
    </location>
</feature>
<feature type="region of interest" description="Interaction with host Mxra8 receptor" evidence="7">
    <location>
        <begin position="509"/>
        <end position="512"/>
    </location>
</feature>
<feature type="region of interest" description="Interaction with host Mxra8 receptor" evidence="7">
    <location>
        <begin position="541"/>
        <end position="547"/>
    </location>
</feature>
<feature type="region of interest" description="Interaction with the capsid protein" evidence="7">
    <location>
        <begin position="716"/>
        <end position="720"/>
    </location>
</feature>
<feature type="region of interest" description="Transient transmembrane before p62-6K protein processing" evidence="11">
    <location>
        <begin position="721"/>
        <end position="741"/>
    </location>
</feature>
<feature type="region of interest" description="E1 fusion peptide loop" evidence="10">
    <location>
        <begin position="893"/>
        <end position="910"/>
    </location>
</feature>
<feature type="short sequence motif" description="Nuclear localization signal" evidence="4">
    <location>
        <begin position="61"/>
        <end position="99"/>
    </location>
</feature>
<feature type="short sequence motif" description="Nuclear export signal" evidence="4">
    <location>
        <begin position="144"/>
        <end position="154"/>
    </location>
</feature>
<feature type="compositionally biased region" description="Polar residues" evidence="13">
    <location>
        <begin position="1"/>
        <end position="10"/>
    </location>
</feature>
<feature type="compositionally biased region" description="Basic residues" evidence="13">
    <location>
        <begin position="60"/>
        <end position="72"/>
    </location>
</feature>
<feature type="compositionally biased region" description="Low complexity" evidence="13">
    <location>
        <begin position="73"/>
        <end position="85"/>
    </location>
</feature>
<feature type="compositionally biased region" description="Basic residues" evidence="13">
    <location>
        <begin position="86"/>
        <end position="101"/>
    </location>
</feature>
<feature type="active site" description="Charge relay system" evidence="12">
    <location>
        <position position="139"/>
    </location>
</feature>
<feature type="active site" description="Charge relay system" evidence="12">
    <location>
        <position position="161"/>
    </location>
</feature>
<feature type="active site" description="Charge relay system" evidence="12">
    <location>
        <position position="213"/>
    </location>
</feature>
<feature type="site" description="Involved in dimerization of the capsid protein" evidence="9">
    <location>
        <position position="187"/>
    </location>
</feature>
<feature type="site" description="Involved in dimerization of the capsid protein" evidence="9">
    <location>
        <position position="220"/>
    </location>
</feature>
<feature type="site" description="Cleavage; by autolysis" evidence="2">
    <location>
        <begin position="261"/>
        <end position="262"/>
    </location>
</feature>
<feature type="site" description="Cleavage; by host furin" evidence="2">
    <location>
        <begin position="325"/>
        <end position="326"/>
    </location>
</feature>
<feature type="site" description="Cleavage; by host signal peptidase" evidence="2">
    <location>
        <begin position="748"/>
        <end position="749"/>
    </location>
</feature>
<feature type="site" description="Cleavage; by host signal peptidase" evidence="2">
    <location>
        <begin position="809"/>
        <end position="810"/>
    </location>
</feature>
<feature type="lipid moiety-binding region" description="S-palmitoyl cysteine; by host" evidence="3">
    <location>
        <position position="721"/>
    </location>
</feature>
<feature type="lipid moiety-binding region" description="S-palmitoyl cysteine; by host" evidence="8">
    <location>
        <position position="741"/>
    </location>
</feature>
<feature type="lipid moiety-binding region" description="S-palmitoyl cysteine; by host" evidence="8">
    <location>
        <position position="742"/>
    </location>
</feature>
<feature type="lipid moiety-binding region" description="S-palmitoyl cysteine; by host" evidence="8">
    <location>
        <position position="1242"/>
    </location>
</feature>
<feature type="glycosylation site" description="N-linked (GlcNAc...) asparagine; by host" evidence="11">
    <location>
        <position position="273"/>
    </location>
</feature>
<feature type="glycosylation site" description="N-linked (GlcNAc...) asparagine; by host" evidence="8">
    <location>
        <position position="588"/>
    </location>
</feature>
<feature type="glycosylation site" description="N-linked (GlcNAc...) asparagine; by host" evidence="11">
    <location>
        <position position="670"/>
    </location>
</feature>
<feature type="glycosylation site" description="N-linked (GlcNAc...) asparagine; by host" evidence="8">
    <location>
        <position position="950"/>
    </location>
</feature>
<feature type="glycosylation site" description="N-linked (GlcNAc...) asparagine; by host" evidence="8">
    <location>
        <position position="1079"/>
    </location>
</feature>
<feature type="disulfide bond" evidence="2">
    <location>
        <begin position="113"/>
        <end position="128"/>
    </location>
</feature>
<feature type="disulfide bond" evidence="7">
    <location>
        <begin position="269"/>
        <end position="278"/>
    </location>
</feature>
<feature type="disulfide bond" evidence="7">
    <location>
        <begin position="283"/>
        <end position="287"/>
    </location>
</feature>
<feature type="disulfide bond" evidence="7">
    <location>
        <begin position="286"/>
        <end position="318"/>
    </location>
</feature>
<feature type="disulfide bond" evidence="7">
    <location>
        <begin position="344"/>
        <end position="450"/>
    </location>
</feature>
<feature type="disulfide bond" evidence="7">
    <location>
        <begin position="347"/>
        <end position="353"/>
    </location>
</feature>
<feature type="disulfide bond" evidence="7">
    <location>
        <begin position="416"/>
        <end position="430"/>
    </location>
</feature>
<feature type="disulfide bond" evidence="7">
    <location>
        <begin position="478"/>
        <end position="591"/>
    </location>
</feature>
<feature type="disulfide bond" evidence="7">
    <location>
        <begin position="526"/>
        <end position="550"/>
    </location>
</feature>
<feature type="disulfide bond" evidence="7">
    <location>
        <begin position="528"/>
        <end position="545"/>
    </location>
</feature>
<feature type="disulfide bond" evidence="7">
    <location>
        <begin position="721"/>
        <end position="742"/>
    </location>
</feature>
<feature type="disulfide bond" evidence="7">
    <location>
        <begin position="858"/>
        <end position="923"/>
    </location>
</feature>
<feature type="disulfide bond" evidence="7">
    <location>
        <begin position="871"/>
        <end position="903"/>
    </location>
</feature>
<feature type="disulfide bond" evidence="7">
    <location>
        <begin position="877"/>
        <end position="887"/>
    </location>
</feature>
<feature type="disulfide bond" evidence="7">
    <location>
        <begin position="1068"/>
        <end position="1080"/>
    </location>
</feature>
<feature type="disulfide bond" evidence="7">
    <location>
        <begin position="1110"/>
        <end position="1185"/>
    </location>
</feature>
<feature type="disulfide bond" evidence="7">
    <location>
        <begin position="1115"/>
        <end position="1189"/>
    </location>
</feature>
<feature type="disulfide bond" evidence="7">
    <location>
        <begin position="1137"/>
        <end position="1179"/>
    </location>
</feature>
<reference key="1">
    <citation type="submission" date="2003-09" db="EMBL/GenBank/DDBJ databases">
        <authorList>
            <person name="Ranadive S.N."/>
        </authorList>
    </citation>
    <scope>NUCLEOTIDE SEQUENCE [GENOMIC RNA]</scope>
</reference>
<reference key="2">
    <citation type="submission" date="2007-02" db="EMBL/GenBank/DDBJ databases">
        <title>Structural protein gene sequences of Chikungunya vaccine virus, its parent and a virulent revertant.</title>
        <authorList>
            <person name="Parker M.D."/>
        </authorList>
    </citation>
    <scope>NUCLEOTIDE SEQUENCE [GENOMIC RNA]</scope>
    <source>
        <strain>TSI-GSD-218</strain>
    </source>
</reference>
<organism>
    <name type="scientific">Chikungunya virus (strain Nagpur)</name>
    <name type="common">CHIKV</name>
    <dbReference type="NCBI Taxonomy" id="371096"/>
    <lineage>
        <taxon>Viruses</taxon>
        <taxon>Riboviria</taxon>
        <taxon>Orthornavirae</taxon>
        <taxon>Kitrinoviricota</taxon>
        <taxon>Alsuviricetes</taxon>
        <taxon>Martellivirales</taxon>
        <taxon>Togaviridae</taxon>
        <taxon>Alphavirus</taxon>
        <taxon>Chikungunya virus</taxon>
    </lineage>
</organism>
<dbReference type="EC" id="3.4.21.90" evidence="2"/>
<dbReference type="EMBL" id="AY424803">
    <property type="protein sequence ID" value="AAR84279.1"/>
    <property type="molecule type" value="Genomic_RNA"/>
</dbReference>
<dbReference type="SMR" id="Q5WQY5"/>
<dbReference type="MEROPS" id="S03.001"/>
<dbReference type="GO" id="GO:0030430">
    <property type="term" value="C:host cell cytoplasm"/>
    <property type="evidence" value="ECO:0007669"/>
    <property type="project" value="UniProtKB-SubCell"/>
</dbReference>
<dbReference type="GO" id="GO:0042025">
    <property type="term" value="C:host cell nucleus"/>
    <property type="evidence" value="ECO:0007669"/>
    <property type="project" value="UniProtKB-SubCell"/>
</dbReference>
<dbReference type="GO" id="GO:0020002">
    <property type="term" value="C:host cell plasma membrane"/>
    <property type="evidence" value="ECO:0007669"/>
    <property type="project" value="UniProtKB-SubCell"/>
</dbReference>
<dbReference type="GO" id="GO:0016020">
    <property type="term" value="C:membrane"/>
    <property type="evidence" value="ECO:0007669"/>
    <property type="project" value="UniProtKB-KW"/>
</dbReference>
<dbReference type="GO" id="GO:0039619">
    <property type="term" value="C:T=4 icosahedral viral capsid"/>
    <property type="evidence" value="ECO:0007669"/>
    <property type="project" value="UniProtKB-KW"/>
</dbReference>
<dbReference type="GO" id="GO:0055036">
    <property type="term" value="C:virion membrane"/>
    <property type="evidence" value="ECO:0007669"/>
    <property type="project" value="UniProtKB-SubCell"/>
</dbReference>
<dbReference type="GO" id="GO:0003723">
    <property type="term" value="F:RNA binding"/>
    <property type="evidence" value="ECO:0007669"/>
    <property type="project" value="UniProtKB-KW"/>
</dbReference>
<dbReference type="GO" id="GO:0004252">
    <property type="term" value="F:serine-type endopeptidase activity"/>
    <property type="evidence" value="ECO:0007669"/>
    <property type="project" value="InterPro"/>
</dbReference>
<dbReference type="GO" id="GO:0005198">
    <property type="term" value="F:structural molecule activity"/>
    <property type="evidence" value="ECO:0007669"/>
    <property type="project" value="InterPro"/>
</dbReference>
<dbReference type="GO" id="GO:0039654">
    <property type="term" value="P:fusion of virus membrane with host endosome membrane"/>
    <property type="evidence" value="ECO:0007669"/>
    <property type="project" value="UniProtKB-KW"/>
</dbReference>
<dbReference type="GO" id="GO:0006508">
    <property type="term" value="P:proteolysis"/>
    <property type="evidence" value="ECO:0007669"/>
    <property type="project" value="UniProtKB-KW"/>
</dbReference>
<dbReference type="GO" id="GO:0046718">
    <property type="term" value="P:symbiont entry into host cell"/>
    <property type="evidence" value="ECO:0007669"/>
    <property type="project" value="UniProtKB-KW"/>
</dbReference>
<dbReference type="GO" id="GO:0039722">
    <property type="term" value="P:symbiont-mediated suppression of host toll-like receptor signaling pathway"/>
    <property type="evidence" value="ECO:0000250"/>
    <property type="project" value="UniProtKB"/>
</dbReference>
<dbReference type="GO" id="GO:0019062">
    <property type="term" value="P:virion attachment to host cell"/>
    <property type="evidence" value="ECO:0007669"/>
    <property type="project" value="UniProtKB-KW"/>
</dbReference>
<dbReference type="FunFam" id="1.10.287.2230:FF:000001">
    <property type="entry name" value="Structural polyprotein"/>
    <property type="match status" value="1"/>
</dbReference>
<dbReference type="FunFam" id="2.40.10.10:FF:000075">
    <property type="entry name" value="Structural polyprotein"/>
    <property type="match status" value="1"/>
</dbReference>
<dbReference type="FunFam" id="2.40.10.10:FF:000076">
    <property type="entry name" value="Structural polyprotein"/>
    <property type="match status" value="1"/>
</dbReference>
<dbReference type="FunFam" id="2.60.40.2400:FF:000001">
    <property type="entry name" value="Structural polyprotein"/>
    <property type="match status" value="1"/>
</dbReference>
<dbReference type="FunFam" id="2.60.40.350:FF:000002">
    <property type="entry name" value="Structural polyprotein"/>
    <property type="match status" value="1"/>
</dbReference>
<dbReference type="FunFam" id="2.60.40.4310:FF:000001">
    <property type="entry name" value="Structural polyprotein"/>
    <property type="match status" value="1"/>
</dbReference>
<dbReference type="FunFam" id="2.60.98.10:FF:000002">
    <property type="entry name" value="Structural polyprotein"/>
    <property type="match status" value="1"/>
</dbReference>
<dbReference type="FunFam" id="2.60.98.10:FF:000004">
    <property type="entry name" value="Structural polyprotein"/>
    <property type="match status" value="1"/>
</dbReference>
<dbReference type="Gene3D" id="1.10.287.2230">
    <property type="match status" value="1"/>
</dbReference>
<dbReference type="Gene3D" id="2.60.40.350">
    <property type="match status" value="1"/>
</dbReference>
<dbReference type="Gene3D" id="2.60.40.3200">
    <property type="entry name" value="Alphavirus E2 glycoprotein, A domain"/>
    <property type="match status" value="1"/>
</dbReference>
<dbReference type="Gene3D" id="2.60.40.4310">
    <property type="entry name" value="Alphavirus E2 glycoprotein, domain B"/>
    <property type="match status" value="1"/>
</dbReference>
<dbReference type="Gene3D" id="2.60.40.2400">
    <property type="entry name" value="Alphavirus E2 glycoprotein, domain C"/>
    <property type="match status" value="1"/>
</dbReference>
<dbReference type="Gene3D" id="2.60.98.10">
    <property type="entry name" value="Tick-borne Encephalitis virus Glycoprotein, domain 1"/>
    <property type="match status" value="3"/>
</dbReference>
<dbReference type="Gene3D" id="2.40.10.10">
    <property type="entry name" value="Trypsin-like serine proteases"/>
    <property type="match status" value="2"/>
</dbReference>
<dbReference type="InterPro" id="IPR002548">
    <property type="entry name" value="Alpha_E1_glycop"/>
</dbReference>
<dbReference type="InterPro" id="IPR000936">
    <property type="entry name" value="Alpha_E2_glycop"/>
</dbReference>
<dbReference type="InterPro" id="IPR002533">
    <property type="entry name" value="Alpha_E3_glycop"/>
</dbReference>
<dbReference type="InterPro" id="IPR042304">
    <property type="entry name" value="Alphavir_E2_A"/>
</dbReference>
<dbReference type="InterPro" id="IPR042305">
    <property type="entry name" value="Alphavir_E2_B"/>
</dbReference>
<dbReference type="InterPro" id="IPR042306">
    <property type="entry name" value="Alphavir_E2_C"/>
</dbReference>
<dbReference type="InterPro" id="IPR000336">
    <property type="entry name" value="Flavivir/Alphavir_Ig-like_sf"/>
</dbReference>
<dbReference type="InterPro" id="IPR036253">
    <property type="entry name" value="Glycoprot_cen/dimer_sf"/>
</dbReference>
<dbReference type="InterPro" id="IPR038055">
    <property type="entry name" value="Glycoprot_E_dimer_dom"/>
</dbReference>
<dbReference type="InterPro" id="IPR014756">
    <property type="entry name" value="Ig_E-set"/>
</dbReference>
<dbReference type="InterPro" id="IPR009003">
    <property type="entry name" value="Peptidase_S1_PA"/>
</dbReference>
<dbReference type="InterPro" id="IPR043504">
    <property type="entry name" value="Peptidase_S1_PA_chymotrypsin"/>
</dbReference>
<dbReference type="InterPro" id="IPR000930">
    <property type="entry name" value="Peptidase_S3"/>
</dbReference>
<dbReference type="Pfam" id="PF01589">
    <property type="entry name" value="Alpha_E1_glycop"/>
    <property type="match status" value="1"/>
</dbReference>
<dbReference type="Pfam" id="PF00943">
    <property type="entry name" value="Alpha_E2_glycop"/>
    <property type="match status" value="1"/>
</dbReference>
<dbReference type="Pfam" id="PF01563">
    <property type="entry name" value="Alpha_E3_glycop"/>
    <property type="match status" value="1"/>
</dbReference>
<dbReference type="Pfam" id="PF00944">
    <property type="entry name" value="Peptidase_S3"/>
    <property type="match status" value="1"/>
</dbReference>
<dbReference type="PRINTS" id="PR00798">
    <property type="entry name" value="TOGAVIRIN"/>
</dbReference>
<dbReference type="SUPFAM" id="SSF81296">
    <property type="entry name" value="E set domains"/>
    <property type="match status" value="1"/>
</dbReference>
<dbReference type="SUPFAM" id="SSF50494">
    <property type="entry name" value="Trypsin-like serine proteases"/>
    <property type="match status" value="1"/>
</dbReference>
<dbReference type="SUPFAM" id="SSF56983">
    <property type="entry name" value="Viral glycoprotein, central and dimerisation domains"/>
    <property type="match status" value="1"/>
</dbReference>
<dbReference type="PROSITE" id="PS51690">
    <property type="entry name" value="ALPHAVIRUS_CP"/>
    <property type="match status" value="1"/>
</dbReference>
<organismHost>
    <name type="scientific">Aedes aegypti</name>
    <name type="common">Yellowfever mosquito</name>
    <name type="synonym">Culex aegypti</name>
    <dbReference type="NCBI Taxonomy" id="7159"/>
</organismHost>
<organismHost>
    <name type="scientific">Aedes albopictus</name>
    <name type="common">Asian tiger mosquito</name>
    <name type="synonym">Stegomyia albopicta</name>
    <dbReference type="NCBI Taxonomy" id="7160"/>
</organismHost>
<organismHost>
    <name type="scientific">Aedes furcifer</name>
    <name type="common">Mosquito</name>
    <dbReference type="NCBI Taxonomy" id="299627"/>
</organismHost>
<organismHost>
    <name type="scientific">Aedes polynesiensis</name>
    <name type="common">Polynesian tiger mosquito</name>
    <dbReference type="NCBI Taxonomy" id="188700"/>
</organismHost>
<organismHost>
    <name type="scientific">Cercopithecus</name>
    <dbReference type="NCBI Taxonomy" id="9533"/>
</organismHost>
<organismHost>
    <name type="scientific">Homo sapiens</name>
    <name type="common">Human</name>
    <dbReference type="NCBI Taxonomy" id="9606"/>
</organismHost>
<organismHost>
    <name type="scientific">Macaca</name>
    <name type="common">macaques</name>
    <dbReference type="NCBI Taxonomy" id="9539"/>
</organismHost>
<organismHost>
    <name type="scientific">Pan troglodytes</name>
    <name type="common">Chimpanzee</name>
    <dbReference type="NCBI Taxonomy" id="9598"/>
</organismHost>
<organismHost>
    <name type="scientific">Papio</name>
    <name type="common">baboons</name>
    <dbReference type="NCBI Taxonomy" id="9554"/>
</organismHost>
<organismHost>
    <name type="scientific">Presbytis</name>
    <dbReference type="NCBI Taxonomy" id="9573"/>
</organismHost>
<comment type="function">
    <molecule>Capsid protein</molecule>
    <text evidence="2 3 6 10">Forms an icosahedral capsid with a T=4 symmetry composed of 240 copies of the capsid protein surrounded by a lipid membrane through which penetrate 80 spikes composed of trimers of E1-E2 heterodimers (By similarity). The capsid protein binds to the viral RNA genome at a site adjacent to a ribosome binding site for viral genome translation following genome release (By similarity). Possesses a protease activity that results in its autocatalytic cleavage from the nascent structural protein (By similarity). Following its self-cleavage, the capsid protein transiently associates with ribosomes, and within several minutes the protein binds to viral RNA and rapidly assembles into icosahedric core particles (By similarity). The resulting nucleocapsid eventually associates with the cytoplasmic domain of the spike glycoprotein E2 at the cell membrane, leading to budding and formation of mature virions (By similarity). In case of infection, new virions attach to target cells and after clathrin-mediated endocytosis their membrane fuses with the host endosomal membrane (By similarity). This leads to the release of the nucleocapsid into the cytoplasm, followed by an uncoating event necessary for the genomic RNA to become accessible (By similarity). The uncoating might be triggered by the interaction of capsid proteins with ribosomes (By similarity). Binding of ribosomes would release the genomic RNA since the same region is genomic RNA-binding and ribosome-binding (By similarity). Specifically inhibits interleukin-1 receptor-associated kinase 1/IRAK1-dependent signaling during viral entry, representing a means by which the alphaviruses may evade innate immune detection and activation prior to viral gene expression (By similarity). Degrades host cyclic GMP-AMP synthase (CGAS) thereby inhibiting the cGAS-STING pathway (By similarity).</text>
</comment>
<comment type="function">
    <molecule>Assembly protein E3</molecule>
    <text evidence="2">Provides the signal sequence for the translocation of the precursor of protein E3/E2 to the host endoplasmic reticulum. Furin-cleaved E3 remains associated with spike glycoprotein E1 and mediates pH protection of the latter during the transport via the secretory pathway. After virion release from the host cell, the assembly protein E3 is gradually released in the extracellular space.</text>
</comment>
<comment type="function">
    <molecule>Spike glycoprotein E2</molecule>
    <text evidence="2 7">Plays a role in viral attachment to target host cell, by binding to the cell receptor MXRA8 (By similarity). Synthesized as a p62 precursor which is processed by furin at the cell membrane just before virion budding, giving rise to E2-E1 heterodimer. The p62-E1 heterodimer is stable, whereas E2-E1 is unstable and dissociate at low pH. p62 is processed at the last step, presumably to avoid E1 fusion activation before its final export to cell surface. E2 C-terminus contains a transitory transmembrane that would be disrupted by palmitoylation, resulting in reorientation of the C-terminal tail from lumenal to cytoplasmic side. This step is critical since E2 C-terminus is involved in budding by interacting with capsid proteins. This release of E2 C-terminus in cytoplasm occurs lately in protein export, and precludes premature assembly of particles at the endoplasmic reticulum membrane (By similarity).</text>
</comment>
<comment type="function">
    <molecule>6K protein</molecule>
    <text evidence="2 3">Acts as a viroporin that participates in virus glycoprotein processing and transport to the plasma membrane, cell permeabilization and budding of viral particles (By similarity). Disrupts the calcium homeostasis of the cell, probably at the endoplasmic reticulum level (By similarity). This leads to cytoplasmic calcium elevation (By similarity). Because of its lipophilic properties, the 6K protein is postulated to influence the selection of lipids that interact with the transmembrane domains of the glycoproteins, which, in turn, affects the deformability of the bilayer required for the extreme curvature that occurs as budding proceeds. Present in low amount in virions, about 3% compared to viral glycoproteins (By similarity).</text>
</comment>
<comment type="function">
    <molecule>Spike glycoprotein E1</molecule>
    <text evidence="3">Class II viral fusion protein. Fusion activity is inactive as long as E1 is bound to E2 in mature virion. After virus attachment to target cell via host MXRA8 and endocytosis, acidification of the endosome induce dissociation of E1/E2 heterodimer and concomitant trimerization of the E1 subunits. This E1 trimer is fusion active, and promotes release of viral nucleocapsid in cytoplasm after endosome and viral membrane fusion. Efficient fusion requires the presence of cholesterol and sphingolipid in the target membrane.</text>
</comment>
<comment type="catalytic activity">
    <reaction evidence="3">
        <text>Autocatalytic release of the core protein from the N-terminus of the togavirus structural polyprotein by hydrolysis of a -Trp-|-Ser- bond.</text>
        <dbReference type="EC" id="3.4.21.90"/>
    </reaction>
</comment>
<comment type="subunit">
    <molecule>Capsid protein</molecule>
    <text evidence="3 9 10">Homodimer (By similarity). Homomultimer (By similarity). Interacts with host karyopherin KPNA4; this interaction allows the nuclear import of the viral capsid protein (By similarity). Interacts with spike glycoprotein E2 (By similarity). Interacts with host IRAK1; the interaction leads to inhibition of IRAK1-dependent signaling (By similarity).</text>
</comment>
<comment type="subunit">
    <molecule>Precursor of protein E3/E2</molecule>
    <text evidence="2 3 5 10">The precursor of protein E3/E2 and E1 form a heterodimer shortly after synthesis (By similarity).</text>
</comment>
<comment type="subunit">
    <molecule>Spike glycoprotein E1</molecule>
    <text evidence="3 7 10">Interacts with spike glycoprotein E2 (By similarity). The precursor of protein E3/E2 and E1 form a heterodimer shortly after synthesis (By similarity). Processing of the precursor of protein E3/E2 into E2 and E3 results in a heterodimer of the spike glycoproteins E2 and E1 (By similarity). Spike at virion surface are constituted of three E2-E1 heterodimers (By similarity). After target cell attachment and endocytosis, E1 change conformation to form homotrimers (By similarity). Interacts with 6K protein (By similarity). Interacts with host MXRA8; this interaction mediates virus entry (By similarity). The interaction involves 2 adjacent E2-E1 heterodimers (By similarity).</text>
</comment>
<comment type="subunit">
    <molecule>Spike glycoprotein E2</molecule>
    <text evidence="3 7">Interacts with spike glycoprotein E1 (By similarity). Processing of the precursor of protein E3/E2 into E2 and E3 results in a heterodimer of the spike glycoproteins E2 and E1 (By similarity). Spike at virion surface are constituted of a trimer of E2-E1 heterodimers (By similarity). Interacts with 6K protein (By similarity). Interacts with host MXRA8; this interaction mediates virus entry (By similarity). The interaction involves 2 adjacent E2-E1 heterodimers (By similarity).</text>
</comment>
<comment type="subunit">
    <molecule>6K protein</molecule>
    <text evidence="3 7">Oligomer (By similarity). Interacts with spike glycoprotein E1. Interacts with spike glycoprotein E2 (By similarity).</text>
</comment>
<comment type="subcellular location">
    <molecule>Capsid protein</molecule>
    <subcellularLocation>
        <location evidence="3">Virion</location>
    </subcellularLocation>
    <subcellularLocation>
        <location evidence="10">Host cytoplasm</location>
    </subcellularLocation>
    <subcellularLocation>
        <location evidence="3">Host cell membrane</location>
    </subcellularLocation>
    <subcellularLocation>
        <location evidence="10">Host nucleus</location>
    </subcellularLocation>
    <text evidence="10">Shuttles between the cytoplasm and the nucleus.</text>
</comment>
<comment type="subcellular location">
    <molecule>Spike glycoprotein E2</molecule>
    <subcellularLocation>
        <location evidence="10">Virion membrane</location>
        <topology evidence="11">Single-pass type I membrane protein</topology>
    </subcellularLocation>
    <subcellularLocation>
        <location evidence="3">Host cell membrane</location>
        <topology evidence="10">Single-pass type I membrane protein</topology>
    </subcellularLocation>
</comment>
<comment type="subcellular location">
    <molecule>6K protein</molecule>
    <subcellularLocation>
        <location evidence="3">Host cell membrane</location>
        <topology evidence="11">Multi-pass membrane protein</topology>
    </subcellularLocation>
    <subcellularLocation>
        <location evidence="3">Virion membrane</location>
        <topology evidence="11">Multi-pass membrane protein</topology>
    </subcellularLocation>
    <subcellularLocation>
        <location evidence="3">Host Golgi apparatus</location>
    </subcellularLocation>
    <subcellularLocation>
        <location>Host Golgi apparatus</location>
        <location>Host trans-Golgi network</location>
    </subcellularLocation>
    <subcellularLocation>
        <location evidence="3">Host endoplasmic reticulum</location>
    </subcellularLocation>
</comment>
<comment type="subcellular location">
    <molecule>Spike glycoprotein E1</molecule>
    <subcellularLocation>
        <location evidence="10">Virion membrane</location>
        <topology evidence="11">Single-pass type I membrane protein</topology>
    </subcellularLocation>
    <subcellularLocation>
        <location evidence="3 10">Host cell membrane</location>
        <topology evidence="11">Single-pass type I membrane protein</topology>
    </subcellularLocation>
</comment>
<comment type="domain">
    <molecule>Capsid protein</molecule>
    <text evidence="3 10">The N-terminus contains a nuclear localization signal and a CRM1-mediated nuclear export signal (By similarity). The C-terminus functions as a protease during translation to cleave itself from the translating structural polyprotein (By similarity).</text>
</comment>
<comment type="domain">
    <text evidence="2">Structural polyprotein: As soon as the capsid protein has been autocleaved, an internal uncleaved signal peptide directs the remaining polyprotein to the endoplasmic reticulum.</text>
</comment>
<comment type="PTM">
    <text evidence="2">Structural polyprotein: Specific enzymatic cleavages in vivo yield mature proteins. Capsid protein is auto-cleaved during polyprotein translation, unmasking a signal peptide at the N-terminus of the precursor of E3/E2 (By similarity). The remaining polyprotein is then targeted to the host endoplasmic reticulum, where host signal peptidase cleaves it into pE2, 6K and E1 proteins. pE2 is further processed to mature E3 and E2 by host furin in trans-Golgi vesicle (By similarity).</text>
</comment>
<comment type="PTM">
    <molecule>Spike glycoprotein E2</molecule>
    <text evidence="2">Palmitoylated via thioester bonds. These palmitoylations may induce disruption of the C-terminus transmembrane. This would result in the reorientation of E2 C-terminus from lumenal to cytoplasmic side.</text>
</comment>
<comment type="PTM">
    <molecule>Spike glycoprotein E1</molecule>
    <text evidence="2">N-glycosylated.</text>
</comment>
<comment type="PTM">
    <molecule>Spike glycoprotein E2</molecule>
    <text evidence="2">N-glycosylated.</text>
</comment>
<comment type="PTM">
    <molecule>Assembly protein E3</molecule>
    <text evidence="2">N-glycosylated.</text>
</comment>
<comment type="PTM">
    <molecule>6K protein</molecule>
    <text evidence="2">Palmitoylated via thioester bonds.</text>
</comment>
<comment type="miscellaneous">
    <text evidence="14">Belongs to the Old World alphaviruses that usually cause fever, maculopapular rash, arthralgia and myalgia.</text>
</comment>
<comment type="miscellaneous">
    <text evidence="9">Structural polyprotein: Translated from a subgenomic RNA synthesized during togavirus replication.</text>
</comment>
<proteinExistence type="inferred from homology"/>
<accession>Q5WQY5</accession>
<protein>
    <recommendedName>
        <fullName>Structural polyprotein</fullName>
    </recommendedName>
    <alternativeName>
        <fullName>p130</fullName>
    </alternativeName>
    <component>
        <recommendedName>
            <fullName>Capsid protein</fullName>
            <ecNumber evidence="2">3.4.21.90</ecNumber>
        </recommendedName>
        <alternativeName>
            <fullName>Coat protein</fullName>
            <shortName>C</shortName>
        </alternativeName>
    </component>
    <component>
        <recommendedName>
            <fullName>Precursor of protein E3/E2</fullName>
        </recommendedName>
        <alternativeName>
            <fullName>p62</fullName>
        </alternativeName>
        <alternativeName>
            <fullName>pE2</fullName>
        </alternativeName>
    </component>
    <component>
        <recommendedName>
            <fullName>Assembly protein E3</fullName>
        </recommendedName>
    </component>
    <component>
        <recommendedName>
            <fullName>Spike glycoprotein E2</fullName>
        </recommendedName>
        <alternativeName>
            <fullName>E2 envelope glycoprotein</fullName>
        </alternativeName>
    </component>
    <component>
        <recommendedName>
            <fullName>6K protein</fullName>
        </recommendedName>
    </component>
    <component>
        <recommendedName>
            <fullName>Spike glycoprotein E1</fullName>
        </recommendedName>
        <alternativeName>
            <fullName>E1 envelope glycoprotein</fullName>
        </alternativeName>
    </component>
</protein>